<comment type="function">
    <text evidence="1">Binds directly to 23S rRNA. The L1 stalk is quite mobile in the ribosome, and is involved in E site tRNA release.</text>
</comment>
<comment type="function">
    <text evidence="1">Protein L1 is also a translational repressor protein, it controls the translation of the L11 operon by binding to its mRNA.</text>
</comment>
<comment type="subunit">
    <text evidence="1">Part of the 50S ribosomal subunit.</text>
</comment>
<comment type="similarity">
    <text evidence="1">Belongs to the universal ribosomal protein uL1 family.</text>
</comment>
<gene>
    <name evidence="1" type="primary">rplA</name>
    <name type="ordered locus">A1S_0284</name>
</gene>
<protein>
    <recommendedName>
        <fullName evidence="1">Large ribosomal subunit protein uL1</fullName>
    </recommendedName>
    <alternativeName>
        <fullName evidence="2">50S ribosomal protein L1</fullName>
    </alternativeName>
</protein>
<reference key="1">
    <citation type="journal article" date="2007" name="Genes Dev.">
        <title>New insights into Acinetobacter baumannii pathogenesis revealed by high-density pyrosequencing and transposon mutagenesis.</title>
        <authorList>
            <person name="Smith M.G."/>
            <person name="Gianoulis T.A."/>
            <person name="Pukatzki S."/>
            <person name="Mekalanos J.J."/>
            <person name="Ornston L.N."/>
            <person name="Gerstein M."/>
            <person name="Snyder M."/>
        </authorList>
    </citation>
    <scope>NUCLEOTIDE SEQUENCE [LARGE SCALE GENOMIC DNA]</scope>
    <source>
        <strain>ATCC 17978 / DSM 105126 / CIP 53.77 / LMG 1025 / NCDC KC755 / 5377</strain>
    </source>
</reference>
<name>RL1_ACIBT</name>
<organism>
    <name type="scientific">Acinetobacter baumannii (strain ATCC 17978 / DSM 105126 / CIP 53.77 / LMG 1025 / NCDC KC755 / 5377)</name>
    <dbReference type="NCBI Taxonomy" id="400667"/>
    <lineage>
        <taxon>Bacteria</taxon>
        <taxon>Pseudomonadati</taxon>
        <taxon>Pseudomonadota</taxon>
        <taxon>Gammaproteobacteria</taxon>
        <taxon>Moraxellales</taxon>
        <taxon>Moraxellaceae</taxon>
        <taxon>Acinetobacter</taxon>
        <taxon>Acinetobacter calcoaceticus/baumannii complex</taxon>
    </lineage>
</organism>
<keyword id="KW-0678">Repressor</keyword>
<keyword id="KW-0687">Ribonucleoprotein</keyword>
<keyword id="KW-0689">Ribosomal protein</keyword>
<keyword id="KW-0694">RNA-binding</keyword>
<keyword id="KW-0699">rRNA-binding</keyword>
<keyword id="KW-0810">Translation regulation</keyword>
<keyword id="KW-0820">tRNA-binding</keyword>
<sequence length="231" mass="23857">MAKLTKRQKAIAAAVEANKVYTLEEAVQVLNSLPAAKFKESLDISVNLGVDPRKSDQVVRGATTLPAGTGKTVRVAVFAQGAQAEAAKEAGADVVGFDDLAESIQGGNLDFDVVIAAPDAMRVVGKLGTILGPRGLMPNPKVGTVTPDVAGAVKNAKSGQARYRVDKAGIIHAAIGQVGFDAAAIRQNVETLVADLKKLKPATSKGVYIKKITLSSTMGPGLTVDVNNVSN</sequence>
<feature type="chain" id="PRO_0000307646" description="Large ribosomal subunit protein uL1">
    <location>
        <begin position="1"/>
        <end position="231"/>
    </location>
</feature>
<dbReference type="EMBL" id="CP000521">
    <property type="protein sequence ID" value="ABO10754.2"/>
    <property type="molecule type" value="Genomic_DNA"/>
</dbReference>
<dbReference type="RefSeq" id="WP_001096694.1">
    <property type="nucleotide sequence ID" value="NZ_CP053098.1"/>
</dbReference>
<dbReference type="SMR" id="A3M1G0"/>
<dbReference type="GeneID" id="92892281"/>
<dbReference type="KEGG" id="acb:A1S_0284"/>
<dbReference type="HOGENOM" id="CLU_062853_0_0_6"/>
<dbReference type="GO" id="GO:0022625">
    <property type="term" value="C:cytosolic large ribosomal subunit"/>
    <property type="evidence" value="ECO:0007669"/>
    <property type="project" value="TreeGrafter"/>
</dbReference>
<dbReference type="GO" id="GO:0019843">
    <property type="term" value="F:rRNA binding"/>
    <property type="evidence" value="ECO:0007669"/>
    <property type="project" value="UniProtKB-UniRule"/>
</dbReference>
<dbReference type="GO" id="GO:0003735">
    <property type="term" value="F:structural constituent of ribosome"/>
    <property type="evidence" value="ECO:0007669"/>
    <property type="project" value="InterPro"/>
</dbReference>
<dbReference type="GO" id="GO:0000049">
    <property type="term" value="F:tRNA binding"/>
    <property type="evidence" value="ECO:0007669"/>
    <property type="project" value="UniProtKB-KW"/>
</dbReference>
<dbReference type="GO" id="GO:0006417">
    <property type="term" value="P:regulation of translation"/>
    <property type="evidence" value="ECO:0007669"/>
    <property type="project" value="UniProtKB-KW"/>
</dbReference>
<dbReference type="GO" id="GO:0006412">
    <property type="term" value="P:translation"/>
    <property type="evidence" value="ECO:0007669"/>
    <property type="project" value="UniProtKB-UniRule"/>
</dbReference>
<dbReference type="CDD" id="cd00403">
    <property type="entry name" value="Ribosomal_L1"/>
    <property type="match status" value="1"/>
</dbReference>
<dbReference type="FunFam" id="3.40.50.790:FF:000001">
    <property type="entry name" value="50S ribosomal protein L1"/>
    <property type="match status" value="1"/>
</dbReference>
<dbReference type="Gene3D" id="3.30.190.20">
    <property type="match status" value="1"/>
</dbReference>
<dbReference type="Gene3D" id="3.40.50.790">
    <property type="match status" value="1"/>
</dbReference>
<dbReference type="HAMAP" id="MF_01318_B">
    <property type="entry name" value="Ribosomal_uL1_B"/>
    <property type="match status" value="1"/>
</dbReference>
<dbReference type="InterPro" id="IPR005878">
    <property type="entry name" value="Ribosom_uL1_bac-type"/>
</dbReference>
<dbReference type="InterPro" id="IPR002143">
    <property type="entry name" value="Ribosomal_uL1"/>
</dbReference>
<dbReference type="InterPro" id="IPR023674">
    <property type="entry name" value="Ribosomal_uL1-like"/>
</dbReference>
<dbReference type="InterPro" id="IPR028364">
    <property type="entry name" value="Ribosomal_uL1/biogenesis"/>
</dbReference>
<dbReference type="InterPro" id="IPR016095">
    <property type="entry name" value="Ribosomal_uL1_3-a/b-sand"/>
</dbReference>
<dbReference type="InterPro" id="IPR023673">
    <property type="entry name" value="Ribosomal_uL1_CS"/>
</dbReference>
<dbReference type="NCBIfam" id="TIGR01169">
    <property type="entry name" value="rplA_bact"/>
    <property type="match status" value="1"/>
</dbReference>
<dbReference type="PANTHER" id="PTHR36427">
    <property type="entry name" value="54S RIBOSOMAL PROTEIN L1, MITOCHONDRIAL"/>
    <property type="match status" value="1"/>
</dbReference>
<dbReference type="PANTHER" id="PTHR36427:SF3">
    <property type="entry name" value="LARGE RIBOSOMAL SUBUNIT PROTEIN UL1M"/>
    <property type="match status" value="1"/>
</dbReference>
<dbReference type="Pfam" id="PF00687">
    <property type="entry name" value="Ribosomal_L1"/>
    <property type="match status" value="1"/>
</dbReference>
<dbReference type="PIRSF" id="PIRSF002155">
    <property type="entry name" value="Ribosomal_L1"/>
    <property type="match status" value="1"/>
</dbReference>
<dbReference type="SUPFAM" id="SSF56808">
    <property type="entry name" value="Ribosomal protein L1"/>
    <property type="match status" value="1"/>
</dbReference>
<dbReference type="PROSITE" id="PS01199">
    <property type="entry name" value="RIBOSOMAL_L1"/>
    <property type="match status" value="1"/>
</dbReference>
<proteinExistence type="inferred from homology"/>
<accession>A3M1G0</accession>
<evidence type="ECO:0000255" key="1">
    <source>
        <dbReference type="HAMAP-Rule" id="MF_01318"/>
    </source>
</evidence>
<evidence type="ECO:0000305" key="2"/>